<dbReference type="EC" id="6.2.1.12" evidence="1"/>
<dbReference type="EMBL" id="AY250836">
    <property type="protein sequence ID" value="AAP03019.1"/>
    <property type="molecule type" value="mRNA"/>
</dbReference>
<dbReference type="EMBL" id="AY376734">
    <property type="protein sequence ID" value="AAQ86593.1"/>
    <property type="molecule type" value="mRNA"/>
</dbReference>
<dbReference type="EMBL" id="AC011000">
    <property type="protein sequence ID" value="AAF75805.1"/>
    <property type="molecule type" value="Genomic_DNA"/>
</dbReference>
<dbReference type="EMBL" id="CP002684">
    <property type="protein sequence ID" value="AEE34025.1"/>
    <property type="molecule type" value="Genomic_DNA"/>
</dbReference>
<dbReference type="PIR" id="B96654">
    <property type="entry name" value="B96654"/>
</dbReference>
<dbReference type="RefSeq" id="NP_176482.1">
    <property type="nucleotide sequence ID" value="NM_104972.3"/>
</dbReference>
<dbReference type="SMR" id="Q9LQ12"/>
<dbReference type="FunCoup" id="Q9LQ12">
    <property type="interactions" value="1449"/>
</dbReference>
<dbReference type="IntAct" id="Q9LQ12">
    <property type="interactions" value="4"/>
</dbReference>
<dbReference type="STRING" id="3702.Q9LQ12"/>
<dbReference type="PaxDb" id="3702-AT1G62940.1"/>
<dbReference type="ProteomicsDB" id="245089"/>
<dbReference type="EnsemblPlants" id="AT1G62940.1">
    <property type="protein sequence ID" value="AT1G62940.1"/>
    <property type="gene ID" value="AT1G62940"/>
</dbReference>
<dbReference type="GeneID" id="842596"/>
<dbReference type="Gramene" id="AT1G62940.1">
    <property type="protein sequence ID" value="AT1G62940.1"/>
    <property type="gene ID" value="AT1G62940"/>
</dbReference>
<dbReference type="KEGG" id="ath:AT1G62940"/>
<dbReference type="Araport" id="AT1G62940"/>
<dbReference type="TAIR" id="AT1G62940">
    <property type="gene designation" value="ACOS5"/>
</dbReference>
<dbReference type="eggNOG" id="KOG1176">
    <property type="taxonomic scope" value="Eukaryota"/>
</dbReference>
<dbReference type="HOGENOM" id="CLU_000022_59_2_1"/>
<dbReference type="InParanoid" id="Q9LQ12"/>
<dbReference type="OMA" id="GLMQDWP"/>
<dbReference type="OrthoDB" id="10253869at2759"/>
<dbReference type="PhylomeDB" id="Q9LQ12"/>
<dbReference type="BioCyc" id="ARA:AT1G62940-MONOMER"/>
<dbReference type="BioCyc" id="MetaCyc:AT1G62940-MONOMER"/>
<dbReference type="PRO" id="PR:Q9LQ12"/>
<dbReference type="Proteomes" id="UP000006548">
    <property type="component" value="Chromosome 1"/>
</dbReference>
<dbReference type="ExpressionAtlas" id="Q9LQ12">
    <property type="expression patterns" value="baseline and differential"/>
</dbReference>
<dbReference type="GO" id="GO:0005737">
    <property type="term" value="C:cytoplasm"/>
    <property type="evidence" value="ECO:0000314"/>
    <property type="project" value="TAIR"/>
</dbReference>
<dbReference type="GO" id="GO:0005783">
    <property type="term" value="C:endoplasmic reticulum"/>
    <property type="evidence" value="ECO:0000314"/>
    <property type="project" value="UniProtKB"/>
</dbReference>
<dbReference type="GO" id="GO:0005524">
    <property type="term" value="F:ATP binding"/>
    <property type="evidence" value="ECO:0007669"/>
    <property type="project" value="UniProtKB-KW"/>
</dbReference>
<dbReference type="GO" id="GO:0004467">
    <property type="term" value="F:long-chain fatty acid-CoA ligase activity"/>
    <property type="evidence" value="ECO:0000314"/>
    <property type="project" value="TAIR"/>
</dbReference>
<dbReference type="GO" id="GO:0031956">
    <property type="term" value="F:medium-chain fatty acid-CoA ligase activity"/>
    <property type="evidence" value="ECO:0000314"/>
    <property type="project" value="TAIR"/>
</dbReference>
<dbReference type="GO" id="GO:0046949">
    <property type="term" value="P:fatty-acyl-CoA biosynthetic process"/>
    <property type="evidence" value="ECO:0000314"/>
    <property type="project" value="TAIR"/>
</dbReference>
<dbReference type="GO" id="GO:0009555">
    <property type="term" value="P:pollen development"/>
    <property type="evidence" value="ECO:0000315"/>
    <property type="project" value="TAIR"/>
</dbReference>
<dbReference type="GO" id="GO:0080110">
    <property type="term" value="P:sporopollenin biosynthetic process"/>
    <property type="evidence" value="ECO:0000315"/>
    <property type="project" value="TAIR"/>
</dbReference>
<dbReference type="CDD" id="cd05904">
    <property type="entry name" value="4CL"/>
    <property type="match status" value="1"/>
</dbReference>
<dbReference type="FunFam" id="3.30.300.30:FF:000007">
    <property type="entry name" value="4-coumarate--CoA ligase 2"/>
    <property type="match status" value="1"/>
</dbReference>
<dbReference type="FunFam" id="3.40.50.12780:FF:000003">
    <property type="entry name" value="Long-chain-fatty-acid--CoA ligase FadD"/>
    <property type="match status" value="1"/>
</dbReference>
<dbReference type="Gene3D" id="3.30.300.30">
    <property type="match status" value="1"/>
</dbReference>
<dbReference type="Gene3D" id="3.40.50.12780">
    <property type="entry name" value="N-terminal domain of ligase-like"/>
    <property type="match status" value="1"/>
</dbReference>
<dbReference type="InterPro" id="IPR025110">
    <property type="entry name" value="AMP-bd_C"/>
</dbReference>
<dbReference type="InterPro" id="IPR045851">
    <property type="entry name" value="AMP-bd_C_sf"/>
</dbReference>
<dbReference type="InterPro" id="IPR000873">
    <property type="entry name" value="AMP-dep_synth/lig_dom"/>
</dbReference>
<dbReference type="InterPro" id="IPR042099">
    <property type="entry name" value="ANL_N_sf"/>
</dbReference>
<dbReference type="PANTHER" id="PTHR24096:SF389">
    <property type="entry name" value="4-COUMARATE--COA LIGASE-LIKE 1"/>
    <property type="match status" value="1"/>
</dbReference>
<dbReference type="PANTHER" id="PTHR24096">
    <property type="entry name" value="LONG-CHAIN-FATTY-ACID--COA LIGASE"/>
    <property type="match status" value="1"/>
</dbReference>
<dbReference type="Pfam" id="PF00501">
    <property type="entry name" value="AMP-binding"/>
    <property type="match status" value="1"/>
</dbReference>
<dbReference type="Pfam" id="PF13193">
    <property type="entry name" value="AMP-binding_C"/>
    <property type="match status" value="1"/>
</dbReference>
<dbReference type="SUPFAM" id="SSF56801">
    <property type="entry name" value="Acetyl-CoA synthetase-like"/>
    <property type="match status" value="1"/>
</dbReference>
<organism>
    <name type="scientific">Arabidopsis thaliana</name>
    <name type="common">Mouse-ear cress</name>
    <dbReference type="NCBI Taxonomy" id="3702"/>
    <lineage>
        <taxon>Eukaryota</taxon>
        <taxon>Viridiplantae</taxon>
        <taxon>Streptophyta</taxon>
        <taxon>Embryophyta</taxon>
        <taxon>Tracheophyta</taxon>
        <taxon>Spermatophyta</taxon>
        <taxon>Magnoliopsida</taxon>
        <taxon>eudicotyledons</taxon>
        <taxon>Gunneridae</taxon>
        <taxon>Pentapetalae</taxon>
        <taxon>rosids</taxon>
        <taxon>malvids</taxon>
        <taxon>Brassicales</taxon>
        <taxon>Brassicaceae</taxon>
        <taxon>Camelineae</taxon>
        <taxon>Arabidopsis</taxon>
    </lineage>
</organism>
<name>4CLL1_ARATH</name>
<accession>Q9LQ12</accession>
<sequence>MESQKQEDNEYIFRSLYPSVPIPDKLTLPEFVLQGVEEYTENVAFVEAVTGKAVTYGDVVRDTKRLAKALTSLGLRKGQVMVVVLPNVAEYGIIALGIMSAGGVFSGANPTALVSEIKKQVEASGARGIITDATNYEKVKSLGLPVIVLGEEKIEGAVNWKDLLEAGDKCGDTDNEEILQTDLCALPFSSGTTGLQKGVMLTHRNLIANLCSTLFGVRSEMIGQIVTLGLIPFFHIYGIVGICCATMKNKGKVVAMSRYDLRIFLNALIAHEVSFAPIVPPIILNLVKNPIVDEFDLSKLKLQSVMTAAAPLAPELLTAFEAKFPNVQVQEAYGLTEHSCITLTHGDPEKGQGIAKRNSVGFILPNLEVKFIDPDTGRSLPKNTSGELCVRSQCVMQGYFMNKEETDKTIDEQGWLHTGDIGYIDDDGDIFIVDRIKELIKYKGFQVAPAELEAILLTHPSVEDVAVVPLPDEEAGEIPAACVVINPKATEKEEDILNFVAANVAHYKKVRAVHFVDSIPKSLSGKIMRRLLRDKILSINKK</sequence>
<feature type="chain" id="PRO_0000299174" description="4-coumarate--CoA ligase-like 1">
    <location>
        <begin position="1"/>
        <end position="542"/>
    </location>
</feature>
<feature type="region of interest" description="SBD1" evidence="2">
    <location>
        <begin position="260"/>
        <end position="331"/>
    </location>
</feature>
<feature type="region of interest" description="SBD2" evidence="2">
    <location>
        <begin position="332"/>
        <end position="399"/>
    </location>
</feature>
<feature type="binding site" evidence="1">
    <location>
        <position position="189"/>
    </location>
    <ligand>
        <name>ATP</name>
        <dbReference type="ChEBI" id="CHEBI:30616"/>
    </ligand>
</feature>
<feature type="binding site" evidence="1">
    <location>
        <position position="190"/>
    </location>
    <ligand>
        <name>ATP</name>
        <dbReference type="ChEBI" id="CHEBI:30616"/>
    </ligand>
</feature>
<feature type="binding site" evidence="1">
    <location>
        <position position="191"/>
    </location>
    <ligand>
        <name>ATP</name>
        <dbReference type="ChEBI" id="CHEBI:30616"/>
    </ligand>
</feature>
<feature type="binding site" evidence="1">
    <location>
        <position position="192"/>
    </location>
    <ligand>
        <name>ATP</name>
        <dbReference type="ChEBI" id="CHEBI:30616"/>
    </ligand>
</feature>
<feature type="binding site" evidence="1">
    <location>
        <position position="193"/>
    </location>
    <ligand>
        <name>ATP</name>
        <dbReference type="ChEBI" id="CHEBI:30616"/>
    </ligand>
</feature>
<feature type="binding site" evidence="1">
    <location>
        <position position="197"/>
    </location>
    <ligand>
        <name>ATP</name>
        <dbReference type="ChEBI" id="CHEBI:30616"/>
    </ligand>
</feature>
<feature type="binding site" evidence="1">
    <location>
        <position position="237"/>
    </location>
    <ligand>
        <name>(E)-4-coumaroyl-AMP</name>
        <dbReference type="ChEBI" id="CHEBI:192348"/>
    </ligand>
</feature>
<feature type="binding site" evidence="1">
    <location>
        <position position="258"/>
    </location>
    <ligand>
        <name>CoA</name>
        <dbReference type="ChEBI" id="CHEBI:57287"/>
    </ligand>
</feature>
<feature type="binding site" evidence="1">
    <location>
        <position position="309"/>
    </location>
    <ligand>
        <name>(E)-4-coumaroyl-AMP</name>
        <dbReference type="ChEBI" id="CHEBI:192348"/>
    </ligand>
</feature>
<feature type="binding site" evidence="1">
    <location>
        <position position="331"/>
    </location>
    <ligand>
        <name>(E)-4-coumaroyl-AMP</name>
        <dbReference type="ChEBI" id="CHEBI:192348"/>
    </ligand>
</feature>
<feature type="binding site" evidence="1">
    <location>
        <position position="331"/>
    </location>
    <ligand>
        <name>ATP</name>
        <dbReference type="ChEBI" id="CHEBI:30616"/>
    </ligand>
</feature>
<feature type="binding site" evidence="1">
    <location>
        <position position="332"/>
    </location>
    <ligand>
        <name>(E)-4-coumaroyl-AMP</name>
        <dbReference type="ChEBI" id="CHEBI:192348"/>
    </ligand>
</feature>
<feature type="binding site" evidence="1">
    <location>
        <position position="332"/>
    </location>
    <ligand>
        <name>ATP</name>
        <dbReference type="ChEBI" id="CHEBI:30616"/>
    </ligand>
</feature>
<feature type="binding site" evidence="1">
    <location>
        <position position="336"/>
    </location>
    <ligand>
        <name>(E)-4-coumaroyl-AMP</name>
        <dbReference type="ChEBI" id="CHEBI:192348"/>
    </ligand>
</feature>
<feature type="binding site" evidence="1">
    <location>
        <position position="336"/>
    </location>
    <ligand>
        <name>ATP</name>
        <dbReference type="ChEBI" id="CHEBI:30616"/>
    </ligand>
</feature>
<feature type="binding site" evidence="1">
    <location>
        <position position="420"/>
    </location>
    <ligand>
        <name>ATP</name>
        <dbReference type="ChEBI" id="CHEBI:30616"/>
    </ligand>
</feature>
<feature type="binding site" evidence="1">
    <location>
        <position position="435"/>
    </location>
    <ligand>
        <name>ATP</name>
        <dbReference type="ChEBI" id="CHEBI:30616"/>
    </ligand>
</feature>
<feature type="binding site" evidence="1">
    <location>
        <position position="437"/>
    </location>
    <ligand>
        <name>(E)-4-coumaroyl-AMP</name>
        <dbReference type="ChEBI" id="CHEBI:192348"/>
    </ligand>
</feature>
<feature type="binding site" evidence="1">
    <location>
        <position position="441"/>
    </location>
    <ligand>
        <name>(E)-4-coumaroyl-AMP</name>
        <dbReference type="ChEBI" id="CHEBI:192348"/>
    </ligand>
</feature>
<feature type="binding site" evidence="1">
    <location>
        <position position="443"/>
    </location>
    <ligand>
        <name>CoA</name>
        <dbReference type="ChEBI" id="CHEBI:57287"/>
    </ligand>
</feature>
<feature type="binding site" evidence="1">
    <location>
        <position position="444"/>
    </location>
    <ligand>
        <name>CoA</name>
        <dbReference type="ChEBI" id="CHEBI:57287"/>
    </ligand>
</feature>
<feature type="binding site" evidence="1">
    <location>
        <position position="526"/>
    </location>
    <ligand>
        <name>ATP</name>
        <dbReference type="ChEBI" id="CHEBI:30616"/>
    </ligand>
</feature>
<gene>
    <name evidence="6" type="primary">4CLL1</name>
    <name evidence="4" type="synonym">ACOS5</name>
    <name evidence="7" type="ordered locus">At1g62940</name>
    <name evidence="8" type="ORF">F16P17.9</name>
</gene>
<comment type="function">
    <text evidence="1">Carboxylate--CoA ligase that may use 4-coumarate as substrate. Follows a two-step reaction mechanism, wherein the carboxylate substrate first undergoes adenylation by ATP, followed by a thioesterification in the presence of CoA to yield the final CoA thioester.</text>
</comment>
<comment type="catalytic activity">
    <reaction evidence="1">
        <text>(E)-4-coumarate + ATP + CoA = (E)-4-coumaroyl-CoA + AMP + diphosphate</text>
        <dbReference type="Rhea" id="RHEA:19641"/>
        <dbReference type="ChEBI" id="CHEBI:12876"/>
        <dbReference type="ChEBI" id="CHEBI:30616"/>
        <dbReference type="ChEBI" id="CHEBI:33019"/>
        <dbReference type="ChEBI" id="CHEBI:57287"/>
        <dbReference type="ChEBI" id="CHEBI:85008"/>
        <dbReference type="ChEBI" id="CHEBI:456215"/>
        <dbReference type="EC" id="6.2.1.12"/>
    </reaction>
    <physiologicalReaction direction="left-to-right" evidence="1">
        <dbReference type="Rhea" id="RHEA:19642"/>
    </physiologicalReaction>
</comment>
<comment type="catalytic activity">
    <reaction evidence="1">
        <text>(E)-4-coumarate + ATP + H(+) = (E)-4-coumaroyl-AMP + diphosphate</text>
        <dbReference type="Rhea" id="RHEA:72419"/>
        <dbReference type="ChEBI" id="CHEBI:12876"/>
        <dbReference type="ChEBI" id="CHEBI:15378"/>
        <dbReference type="ChEBI" id="CHEBI:30616"/>
        <dbReference type="ChEBI" id="CHEBI:33019"/>
        <dbReference type="ChEBI" id="CHEBI:192348"/>
    </reaction>
    <physiologicalReaction direction="left-to-right" evidence="1">
        <dbReference type="Rhea" id="RHEA:72420"/>
    </physiologicalReaction>
</comment>
<comment type="catalytic activity">
    <reaction evidence="1">
        <text>(E)-4-coumaroyl-AMP + CoA = (E)-4-coumaroyl-CoA + AMP + H(+)</text>
        <dbReference type="Rhea" id="RHEA:72423"/>
        <dbReference type="ChEBI" id="CHEBI:15378"/>
        <dbReference type="ChEBI" id="CHEBI:57287"/>
        <dbReference type="ChEBI" id="CHEBI:85008"/>
        <dbReference type="ChEBI" id="CHEBI:192348"/>
        <dbReference type="ChEBI" id="CHEBI:456215"/>
    </reaction>
    <physiologicalReaction direction="left-to-right" evidence="1">
        <dbReference type="Rhea" id="RHEA:72424"/>
    </physiologicalReaction>
</comment>
<comment type="cofactor">
    <cofactor evidence="1">
        <name>Mg(2+)</name>
        <dbReference type="ChEBI" id="CHEBI:18420"/>
    </cofactor>
</comment>
<comment type="subunit">
    <text evidence="3">Interacts with TKPR1, PKSA and PKSB.</text>
</comment>
<comment type="interaction">
    <interactant intactId="EBI-30859465">
        <id>Q9LQ12</id>
    </interactant>
    <interactant intactId="EBI-30859485">
        <id>O23674</id>
        <label>PKSA</label>
    </interactant>
    <organismsDiffer>false</organismsDiffer>
    <experiments>3</experiments>
</comment>
<comment type="interaction">
    <interactant intactId="EBI-30859465">
        <id>Q9LQ12</id>
    </interactant>
    <interactant intactId="EBI-30859537">
        <id>Q8LDM2</id>
        <label>PKSB</label>
    </interactant>
    <organismsDiffer>false</organismsDiffer>
    <experiments>4</experiments>
</comment>
<comment type="interaction">
    <interactant intactId="EBI-30859465">
        <id>Q9LQ12</id>
    </interactant>
    <interactant intactId="EBI-4432350">
        <id>Q500U8</id>
        <label>TKPR1</label>
    </interactant>
    <organismsDiffer>false</organismsDiffer>
    <experiments>3</experiments>
</comment>
<comment type="subcellular location">
    <subcellularLocation>
        <location evidence="3">Endoplasmic reticulum</location>
    </subcellularLocation>
</comment>
<comment type="tissue specificity">
    <text evidence="3">Mostly confined to anther tapetal cells.</text>
</comment>
<comment type="domain">
    <text evidence="2">Both substrate-binding domains (SBD1 and SBD2) are involved in the substrate recognition, and are sufficient to confer the substrate specificity.</text>
</comment>
<comment type="similarity">
    <text evidence="5">Belongs to the ATP-dependent AMP-binding enzyme family.</text>
</comment>
<proteinExistence type="evidence at protein level"/>
<evidence type="ECO:0000250" key="1">
    <source>
        <dbReference type="UniProtKB" id="O24146"/>
    </source>
</evidence>
<evidence type="ECO:0000250" key="2">
    <source>
        <dbReference type="UniProtKB" id="Q42524"/>
    </source>
</evidence>
<evidence type="ECO:0000269" key="3">
    <source>
    </source>
</evidence>
<evidence type="ECO:0000303" key="4">
    <source>
    </source>
</evidence>
<evidence type="ECO:0000305" key="5"/>
<evidence type="ECO:0000305" key="6">
    <source>
    </source>
</evidence>
<evidence type="ECO:0000312" key="7">
    <source>
        <dbReference type="Araport" id="AT1G62940"/>
    </source>
</evidence>
<evidence type="ECO:0000312" key="8">
    <source>
        <dbReference type="EMBL" id="AAF75805.1"/>
    </source>
</evidence>
<protein>
    <recommendedName>
        <fullName evidence="6">4-coumarate--CoA ligase-like 1</fullName>
        <ecNumber evidence="1">6.2.1.12</ecNumber>
    </recommendedName>
    <alternativeName>
        <fullName>4-coumarate--CoA ligase isoform 10</fullName>
        <shortName>At4CL10</shortName>
    </alternativeName>
</protein>
<reference key="1">
    <citation type="journal article" date="2003" name="Plant Physiol.">
        <title>Arabidopsis contains a large superfamily of acyl-activating enzymes. Phylogenetic and biochemical analysis reveals a new class of acyl-coenzyme a synthetases.</title>
        <authorList>
            <person name="Shockey J.M."/>
            <person name="Fulda M.S."/>
            <person name="Browse J."/>
        </authorList>
    </citation>
    <scope>NUCLEOTIDE SEQUENCE [MRNA]</scope>
    <scope>GENE FAMILY ORGANIZATION</scope>
    <source>
        <strain>cv. Wassilewskija</strain>
    </source>
</reference>
<reference key="2">
    <citation type="submission" date="2003-10" db="EMBL/GenBank/DDBJ databases">
        <title>Functional classification of Arabidopsis thaliana 4-coumarate CoA ligase genes.</title>
        <authorList>
            <person name="Lawrence P.K."/>
        </authorList>
    </citation>
    <scope>NUCLEOTIDE SEQUENCE [MRNA]</scope>
</reference>
<reference key="3">
    <citation type="journal article" date="2000" name="Nature">
        <title>Sequence and analysis of chromosome 1 of the plant Arabidopsis thaliana.</title>
        <authorList>
            <person name="Theologis A."/>
            <person name="Ecker J.R."/>
            <person name="Palm C.J."/>
            <person name="Federspiel N.A."/>
            <person name="Kaul S."/>
            <person name="White O."/>
            <person name="Alonso J."/>
            <person name="Altafi H."/>
            <person name="Araujo R."/>
            <person name="Bowman C.L."/>
            <person name="Brooks S.Y."/>
            <person name="Buehler E."/>
            <person name="Chan A."/>
            <person name="Chao Q."/>
            <person name="Chen H."/>
            <person name="Cheuk R.F."/>
            <person name="Chin C.W."/>
            <person name="Chung M.K."/>
            <person name="Conn L."/>
            <person name="Conway A.B."/>
            <person name="Conway A.R."/>
            <person name="Creasy T.H."/>
            <person name="Dewar K."/>
            <person name="Dunn P."/>
            <person name="Etgu P."/>
            <person name="Feldblyum T.V."/>
            <person name="Feng J.-D."/>
            <person name="Fong B."/>
            <person name="Fujii C.Y."/>
            <person name="Gill J.E."/>
            <person name="Goldsmith A.D."/>
            <person name="Haas B."/>
            <person name="Hansen N.F."/>
            <person name="Hughes B."/>
            <person name="Huizar L."/>
            <person name="Hunter J.L."/>
            <person name="Jenkins J."/>
            <person name="Johnson-Hopson C."/>
            <person name="Khan S."/>
            <person name="Khaykin E."/>
            <person name="Kim C.J."/>
            <person name="Koo H.L."/>
            <person name="Kremenetskaia I."/>
            <person name="Kurtz D.B."/>
            <person name="Kwan A."/>
            <person name="Lam B."/>
            <person name="Langin-Hooper S."/>
            <person name="Lee A."/>
            <person name="Lee J.M."/>
            <person name="Lenz C.A."/>
            <person name="Li J.H."/>
            <person name="Li Y.-P."/>
            <person name="Lin X."/>
            <person name="Liu S.X."/>
            <person name="Liu Z.A."/>
            <person name="Luros J.S."/>
            <person name="Maiti R."/>
            <person name="Marziali A."/>
            <person name="Militscher J."/>
            <person name="Miranda M."/>
            <person name="Nguyen M."/>
            <person name="Nierman W.C."/>
            <person name="Osborne B.I."/>
            <person name="Pai G."/>
            <person name="Peterson J."/>
            <person name="Pham P.K."/>
            <person name="Rizzo M."/>
            <person name="Rooney T."/>
            <person name="Rowley D."/>
            <person name="Sakano H."/>
            <person name="Salzberg S.L."/>
            <person name="Schwartz J.R."/>
            <person name="Shinn P."/>
            <person name="Southwick A.M."/>
            <person name="Sun H."/>
            <person name="Tallon L.J."/>
            <person name="Tambunga G."/>
            <person name="Toriumi M.J."/>
            <person name="Town C.D."/>
            <person name="Utterback T."/>
            <person name="Van Aken S."/>
            <person name="Vaysberg M."/>
            <person name="Vysotskaia V.S."/>
            <person name="Walker M."/>
            <person name="Wu D."/>
            <person name="Yu G."/>
            <person name="Fraser C.M."/>
            <person name="Venter J.C."/>
            <person name="Davis R.W."/>
        </authorList>
    </citation>
    <scope>NUCLEOTIDE SEQUENCE [LARGE SCALE GENOMIC DNA]</scope>
    <source>
        <strain>cv. Columbia</strain>
    </source>
</reference>
<reference key="4">
    <citation type="journal article" date="2017" name="Plant J.">
        <title>Araport11: a complete reannotation of the Arabidopsis thaliana reference genome.</title>
        <authorList>
            <person name="Cheng C.Y."/>
            <person name="Krishnakumar V."/>
            <person name="Chan A.P."/>
            <person name="Thibaud-Nissen F."/>
            <person name="Schobel S."/>
            <person name="Town C.D."/>
        </authorList>
    </citation>
    <scope>GENOME REANNOTATION</scope>
    <source>
        <strain>cv. Columbia</strain>
    </source>
</reference>
<reference key="5">
    <citation type="journal article" date="2003" name="Proc. Natl. Acad. Sci. U.S.A.">
        <title>The substrate specificity-determining amino acid code of 4-coumarate:CoA ligase.</title>
        <authorList>
            <person name="Schneider K."/>
            <person name="Hoevel K."/>
            <person name="Witzel K."/>
            <person name="Hamberger B."/>
            <person name="Schomburg D."/>
            <person name="Kombrink E."/>
            <person name="Stuible H.-P."/>
        </authorList>
    </citation>
    <scope>GENE FAMILY ORGANIZATION</scope>
</reference>
<reference key="6">
    <citation type="journal article" date="2013" name="Plant Physiol.">
        <title>Sporopollenin biosynthetic enzymes interact and constitute a metabolon localized to the endoplasmic reticulum of tapetum cells.</title>
        <authorList>
            <person name="Lallemand B."/>
            <person name="Erhardt M."/>
            <person name="Heitz T."/>
            <person name="Legrand M."/>
        </authorList>
    </citation>
    <scope>SUBCELLULAR LOCATION</scope>
    <scope>TISSUE SPECIFICITY</scope>
    <scope>INTERACTION WITH TKPR1; PKSA AND PKSB</scope>
</reference>
<keyword id="KW-0067">ATP-binding</keyword>
<keyword id="KW-0256">Endoplasmic reticulum</keyword>
<keyword id="KW-0436">Ligase</keyword>
<keyword id="KW-0460">Magnesium</keyword>
<keyword id="KW-0547">Nucleotide-binding</keyword>
<keyword id="KW-1185">Reference proteome</keyword>